<reference key="1">
    <citation type="journal article" date="2008" name="Genome Biol.">
        <title>A genomic analysis of the archaeal system Ignicoccus hospitalis-Nanoarchaeum equitans.</title>
        <authorList>
            <person name="Podar M."/>
            <person name="Anderson I."/>
            <person name="Makarova K.S."/>
            <person name="Elkins J.G."/>
            <person name="Ivanova N."/>
            <person name="Wall M.A."/>
            <person name="Lykidis A."/>
            <person name="Mavromatis K."/>
            <person name="Sun H."/>
            <person name="Hudson M.E."/>
            <person name="Chen W."/>
            <person name="Deciu C."/>
            <person name="Hutchison D."/>
            <person name="Eads J.R."/>
            <person name="Anderson A."/>
            <person name="Fernandes F."/>
            <person name="Szeto E."/>
            <person name="Lapidus A."/>
            <person name="Kyrpides N.C."/>
            <person name="Saier M.H. Jr."/>
            <person name="Richardson P.M."/>
            <person name="Rachel R."/>
            <person name="Huber H."/>
            <person name="Eisen J.A."/>
            <person name="Koonin E.V."/>
            <person name="Keller M."/>
            <person name="Stetter K.O."/>
        </authorList>
    </citation>
    <scope>NUCLEOTIDE SEQUENCE [LARGE SCALE GENOMIC DNA]</scope>
    <source>
        <strain>KIN4/I / DSM 18386 / JCM 14125</strain>
    </source>
</reference>
<keyword id="KW-0004">4Fe-4S</keyword>
<keyword id="KW-0408">Iron</keyword>
<keyword id="KW-0411">Iron-sulfur</keyword>
<keyword id="KW-0456">Lyase</keyword>
<keyword id="KW-0479">Metal-binding</keyword>
<keyword id="KW-1185">Reference proteome</keyword>
<keyword id="KW-0949">S-adenosyl-L-methionine</keyword>
<keyword id="KW-0784">Thiamine biosynthesis</keyword>
<keyword id="KW-0862">Zinc</keyword>
<protein>
    <recommendedName>
        <fullName evidence="1">Phosphomethylpyrimidine synthase</fullName>
        <ecNumber evidence="1">4.1.99.17</ecNumber>
    </recommendedName>
    <alternativeName>
        <fullName evidence="1">Hydroxymethylpyrimidine phosphate synthase</fullName>
        <shortName evidence="1">HMP-P synthase</shortName>
        <shortName evidence="1">HMP-phosphate synthase</shortName>
        <shortName evidence="1">HMPP synthase</shortName>
    </alternativeName>
    <alternativeName>
        <fullName evidence="1">Thiamine biosynthesis protein ThiC</fullName>
    </alternativeName>
</protein>
<accession>A8A8N6</accession>
<gene>
    <name evidence="1" type="primary">thiC</name>
    <name type="ordered locus">Igni_0104</name>
</gene>
<evidence type="ECO:0000255" key="1">
    <source>
        <dbReference type="HAMAP-Rule" id="MF_00089"/>
    </source>
</evidence>
<name>THIC_IGNH4</name>
<sequence>MTIYKDARNGRITEEMKKIAEVEGVDPEFVRRGLAAGRIVLLRNLKRADRVKTVAVGEGMLTKVNANIGTSNTLIDVNMEVEKAKIAKKYGADTVMDLSTGGNLDVIRRKIMEAAEPLPLGTVPIYQAFMDVATRKGAGLYMTEDDILNTIEKHLKDGVDFMTLHAALTRDLAAKAVKSDRAEPIVSRGGSILAAWMLEHGKENPLLSNFDYILEMFKEYDAVISLGDSLRPGALEDAHDEYHLSELMVNARLVKRAREAGVQVMLEGPGHVPLDRVVADVKLAKRLTEGAPYYILGPLVTDIAAGYDHIAGAIGGAIAAAHGADFLCYVTPAEHLNLPNPEQVREGVIAFRIAAHAADIVKYPDRAMKVDIEMGRCRGRLDWECMIRLSLDPDKAREIRNQYGPTSIKSCNMCGSLCVFLLLDKWRRKKDEELHAPLA</sequence>
<feature type="chain" id="PRO_1000004763" description="Phosphomethylpyrimidine synthase">
    <location>
        <begin position="1"/>
        <end position="439"/>
    </location>
</feature>
<feature type="binding site" evidence="1">
    <location>
        <position position="67"/>
    </location>
    <ligand>
        <name>substrate</name>
    </ligand>
</feature>
<feature type="binding site" evidence="1">
    <location>
        <position position="96"/>
    </location>
    <ligand>
        <name>substrate</name>
    </ligand>
</feature>
<feature type="binding site" evidence="1">
    <location>
        <position position="126"/>
    </location>
    <ligand>
        <name>substrate</name>
    </ligand>
</feature>
<feature type="binding site" evidence="1">
    <location>
        <position position="165"/>
    </location>
    <ligand>
        <name>substrate</name>
    </ligand>
</feature>
<feature type="binding site" evidence="1">
    <location>
        <begin position="187"/>
        <end position="189"/>
    </location>
    <ligand>
        <name>substrate</name>
    </ligand>
</feature>
<feature type="binding site" evidence="1">
    <location>
        <begin position="228"/>
        <end position="231"/>
    </location>
    <ligand>
        <name>substrate</name>
    </ligand>
</feature>
<feature type="binding site" evidence="1">
    <location>
        <position position="267"/>
    </location>
    <ligand>
        <name>substrate</name>
    </ligand>
</feature>
<feature type="binding site" evidence="1">
    <location>
        <position position="271"/>
    </location>
    <ligand>
        <name>Zn(2+)</name>
        <dbReference type="ChEBI" id="CHEBI:29105"/>
    </ligand>
</feature>
<feature type="binding site" evidence="1">
    <location>
        <position position="294"/>
    </location>
    <ligand>
        <name>substrate</name>
    </ligand>
</feature>
<feature type="binding site" evidence="1">
    <location>
        <position position="335"/>
    </location>
    <ligand>
        <name>Zn(2+)</name>
        <dbReference type="ChEBI" id="CHEBI:29105"/>
    </ligand>
</feature>
<feature type="binding site" evidence="1">
    <location>
        <position position="411"/>
    </location>
    <ligand>
        <name>[4Fe-4S] cluster</name>
        <dbReference type="ChEBI" id="CHEBI:49883"/>
        <note>4Fe-4S-S-AdoMet</note>
    </ligand>
</feature>
<feature type="binding site" evidence="1">
    <location>
        <position position="414"/>
    </location>
    <ligand>
        <name>[4Fe-4S] cluster</name>
        <dbReference type="ChEBI" id="CHEBI:49883"/>
        <note>4Fe-4S-S-AdoMet</note>
    </ligand>
</feature>
<feature type="binding site" evidence="1">
    <location>
        <position position="418"/>
    </location>
    <ligand>
        <name>[4Fe-4S] cluster</name>
        <dbReference type="ChEBI" id="CHEBI:49883"/>
        <note>4Fe-4S-S-AdoMet</note>
    </ligand>
</feature>
<proteinExistence type="inferred from homology"/>
<dbReference type="EC" id="4.1.99.17" evidence="1"/>
<dbReference type="EMBL" id="CP000816">
    <property type="protein sequence ID" value="ABU81288.1"/>
    <property type="molecule type" value="Genomic_DNA"/>
</dbReference>
<dbReference type="RefSeq" id="WP_011998140.1">
    <property type="nucleotide sequence ID" value="NC_009776.1"/>
</dbReference>
<dbReference type="SMR" id="A8A8N6"/>
<dbReference type="STRING" id="453591.Igni_0104"/>
<dbReference type="GeneID" id="5563131"/>
<dbReference type="KEGG" id="iho:Igni_0104"/>
<dbReference type="eggNOG" id="arCOG02741">
    <property type="taxonomic scope" value="Archaea"/>
</dbReference>
<dbReference type="HOGENOM" id="CLU_013181_2_2_2"/>
<dbReference type="OrthoDB" id="335406at2157"/>
<dbReference type="PhylomeDB" id="A8A8N6"/>
<dbReference type="UniPathway" id="UPA00060"/>
<dbReference type="Proteomes" id="UP000000262">
    <property type="component" value="Chromosome"/>
</dbReference>
<dbReference type="GO" id="GO:0051539">
    <property type="term" value="F:4 iron, 4 sulfur cluster binding"/>
    <property type="evidence" value="ECO:0007669"/>
    <property type="project" value="UniProtKB-KW"/>
</dbReference>
<dbReference type="GO" id="GO:0016830">
    <property type="term" value="F:carbon-carbon lyase activity"/>
    <property type="evidence" value="ECO:0007669"/>
    <property type="project" value="InterPro"/>
</dbReference>
<dbReference type="GO" id="GO:0008270">
    <property type="term" value="F:zinc ion binding"/>
    <property type="evidence" value="ECO:0007669"/>
    <property type="project" value="UniProtKB-UniRule"/>
</dbReference>
<dbReference type="GO" id="GO:0009228">
    <property type="term" value="P:thiamine biosynthetic process"/>
    <property type="evidence" value="ECO:0007669"/>
    <property type="project" value="UniProtKB-KW"/>
</dbReference>
<dbReference type="GO" id="GO:0009229">
    <property type="term" value="P:thiamine diphosphate biosynthetic process"/>
    <property type="evidence" value="ECO:0007669"/>
    <property type="project" value="UniProtKB-UniRule"/>
</dbReference>
<dbReference type="Gene3D" id="6.10.250.620">
    <property type="match status" value="1"/>
</dbReference>
<dbReference type="Gene3D" id="3.20.20.540">
    <property type="entry name" value="Radical SAM ThiC family, central domain"/>
    <property type="match status" value="1"/>
</dbReference>
<dbReference type="HAMAP" id="MF_00089">
    <property type="entry name" value="ThiC"/>
    <property type="match status" value="1"/>
</dbReference>
<dbReference type="InterPro" id="IPR037509">
    <property type="entry name" value="ThiC"/>
</dbReference>
<dbReference type="InterPro" id="IPR038521">
    <property type="entry name" value="ThiC/Bza_core_dom"/>
</dbReference>
<dbReference type="InterPro" id="IPR002817">
    <property type="entry name" value="ThiC/BzaA/B"/>
</dbReference>
<dbReference type="NCBIfam" id="NF009895">
    <property type="entry name" value="PRK13352.1"/>
    <property type="match status" value="1"/>
</dbReference>
<dbReference type="NCBIfam" id="TIGR00190">
    <property type="entry name" value="thiC"/>
    <property type="match status" value="1"/>
</dbReference>
<dbReference type="PANTHER" id="PTHR30557:SF1">
    <property type="entry name" value="PHOSPHOMETHYLPYRIMIDINE SYNTHASE, CHLOROPLASTIC"/>
    <property type="match status" value="1"/>
</dbReference>
<dbReference type="PANTHER" id="PTHR30557">
    <property type="entry name" value="THIAMINE BIOSYNTHESIS PROTEIN THIC"/>
    <property type="match status" value="1"/>
</dbReference>
<dbReference type="Pfam" id="PF01964">
    <property type="entry name" value="ThiC_Rad_SAM"/>
    <property type="match status" value="1"/>
</dbReference>
<dbReference type="SFLD" id="SFLDF00407">
    <property type="entry name" value="phosphomethylpyrimidine_syntha"/>
    <property type="match status" value="1"/>
</dbReference>
<dbReference type="SFLD" id="SFLDG01114">
    <property type="entry name" value="phosphomethylpyrimidine_syntha"/>
    <property type="match status" value="1"/>
</dbReference>
<dbReference type="SFLD" id="SFLDS00113">
    <property type="entry name" value="Radical_SAM_Phosphomethylpyrim"/>
    <property type="match status" value="1"/>
</dbReference>
<organism>
    <name type="scientific">Ignicoccus hospitalis (strain KIN4/I / DSM 18386 / JCM 14125)</name>
    <dbReference type="NCBI Taxonomy" id="453591"/>
    <lineage>
        <taxon>Archaea</taxon>
        <taxon>Thermoproteota</taxon>
        <taxon>Thermoprotei</taxon>
        <taxon>Desulfurococcales</taxon>
        <taxon>Desulfurococcaceae</taxon>
        <taxon>Ignicoccus</taxon>
    </lineage>
</organism>
<comment type="function">
    <text evidence="1">Catalyzes the synthesis of the hydroxymethylpyrimidine phosphate (HMP-P) moiety of thiamine from aminoimidazole ribotide (AIR) in a radical S-adenosyl-L-methionine (SAM)-dependent reaction.</text>
</comment>
<comment type="catalytic activity">
    <reaction evidence="1">
        <text>5-amino-1-(5-phospho-beta-D-ribosyl)imidazole + S-adenosyl-L-methionine = 4-amino-2-methyl-5-(phosphooxymethyl)pyrimidine + CO + 5'-deoxyadenosine + formate + L-methionine + 3 H(+)</text>
        <dbReference type="Rhea" id="RHEA:24840"/>
        <dbReference type="ChEBI" id="CHEBI:15378"/>
        <dbReference type="ChEBI" id="CHEBI:15740"/>
        <dbReference type="ChEBI" id="CHEBI:17245"/>
        <dbReference type="ChEBI" id="CHEBI:17319"/>
        <dbReference type="ChEBI" id="CHEBI:57844"/>
        <dbReference type="ChEBI" id="CHEBI:58354"/>
        <dbReference type="ChEBI" id="CHEBI:59789"/>
        <dbReference type="ChEBI" id="CHEBI:137981"/>
        <dbReference type="EC" id="4.1.99.17"/>
    </reaction>
</comment>
<comment type="cofactor">
    <cofactor evidence="1">
        <name>[4Fe-4S] cluster</name>
        <dbReference type="ChEBI" id="CHEBI:49883"/>
    </cofactor>
    <text evidence="1">Binds 1 [4Fe-4S] cluster per subunit. The cluster is coordinated with 3 cysteines and an exchangeable S-adenosyl-L-methionine.</text>
</comment>
<comment type="pathway">
    <text evidence="1">Cofactor biosynthesis; thiamine diphosphate biosynthesis.</text>
</comment>
<comment type="similarity">
    <text evidence="1">Belongs to the ThiC family.</text>
</comment>